<accession>Q3JST3</accession>
<evidence type="ECO:0000255" key="1">
    <source>
        <dbReference type="HAMAP-Rule" id="MF_00170"/>
    </source>
</evidence>
<name>RPIA_BURP1</name>
<sequence>MTQDELKRLVGEAAARYVTENVPQGAVIGVGTGSTANCFIDALAAVKDRYRGAVSSSVATTERLKSHGIKVFDLNEIESLQVYVDGADEIDGSGAMIKGGGGALTREKIVASVAETFVCIADASKRVAVLGQFPLPVEVVPMARTAIGRRLAALGGVPVLRVKQDGAPYVTDNGNEILDVKGLRIDDPRALEAAINGWPGVVTVGLFAQRGADLCLLGTERGVETLRYAAH</sequence>
<reference key="1">
    <citation type="journal article" date="2010" name="Genome Biol. Evol.">
        <title>Continuing evolution of Burkholderia mallei through genome reduction and large-scale rearrangements.</title>
        <authorList>
            <person name="Losada L."/>
            <person name="Ronning C.M."/>
            <person name="DeShazer D."/>
            <person name="Woods D."/>
            <person name="Fedorova N."/>
            <person name="Kim H.S."/>
            <person name="Shabalina S.A."/>
            <person name="Pearson T.R."/>
            <person name="Brinkac L."/>
            <person name="Tan P."/>
            <person name="Nandi T."/>
            <person name="Crabtree J."/>
            <person name="Badger J."/>
            <person name="Beckstrom-Sternberg S."/>
            <person name="Saqib M."/>
            <person name="Schutzer S.E."/>
            <person name="Keim P."/>
            <person name="Nierman W.C."/>
        </authorList>
    </citation>
    <scope>NUCLEOTIDE SEQUENCE [LARGE SCALE GENOMIC DNA]</scope>
    <source>
        <strain>1710b</strain>
    </source>
</reference>
<keyword id="KW-0413">Isomerase</keyword>
<protein>
    <recommendedName>
        <fullName evidence="1">Ribose-5-phosphate isomerase A</fullName>
        <ecNumber evidence="1">5.3.1.6</ecNumber>
    </recommendedName>
    <alternativeName>
        <fullName evidence="1">Phosphoriboisomerase A</fullName>
        <shortName evidence="1">PRI</shortName>
    </alternativeName>
</protein>
<proteinExistence type="inferred from homology"/>
<comment type="function">
    <text evidence="1">Catalyzes the reversible conversion of ribose-5-phosphate to ribulose 5-phosphate.</text>
</comment>
<comment type="catalytic activity">
    <reaction evidence="1">
        <text>aldehydo-D-ribose 5-phosphate = D-ribulose 5-phosphate</text>
        <dbReference type="Rhea" id="RHEA:14657"/>
        <dbReference type="ChEBI" id="CHEBI:58121"/>
        <dbReference type="ChEBI" id="CHEBI:58273"/>
        <dbReference type="EC" id="5.3.1.6"/>
    </reaction>
</comment>
<comment type="pathway">
    <text evidence="1">Carbohydrate degradation; pentose phosphate pathway; D-ribose 5-phosphate from D-ribulose 5-phosphate (non-oxidative stage): step 1/1.</text>
</comment>
<comment type="subunit">
    <text evidence="1">Homodimer.</text>
</comment>
<comment type="similarity">
    <text evidence="1">Belongs to the ribose 5-phosphate isomerase family.</text>
</comment>
<feature type="chain" id="PRO_1000016913" description="Ribose-5-phosphate isomerase A">
    <location>
        <begin position="1"/>
        <end position="231"/>
    </location>
</feature>
<feature type="active site" description="Proton acceptor" evidence="1">
    <location>
        <position position="107"/>
    </location>
</feature>
<feature type="binding site" evidence="1">
    <location>
        <begin position="32"/>
        <end position="35"/>
    </location>
    <ligand>
        <name>substrate</name>
    </ligand>
</feature>
<feature type="binding site" evidence="1">
    <location>
        <begin position="85"/>
        <end position="88"/>
    </location>
    <ligand>
        <name>substrate</name>
    </ligand>
</feature>
<feature type="binding site" evidence="1">
    <location>
        <begin position="98"/>
        <end position="101"/>
    </location>
    <ligand>
        <name>substrate</name>
    </ligand>
</feature>
<feature type="binding site" evidence="1">
    <location>
        <position position="125"/>
    </location>
    <ligand>
        <name>substrate</name>
    </ligand>
</feature>
<gene>
    <name evidence="1" type="primary">rpiA</name>
    <name type="ordered locus">BURPS1710b_1973</name>
</gene>
<organism>
    <name type="scientific">Burkholderia pseudomallei (strain 1710b)</name>
    <dbReference type="NCBI Taxonomy" id="320372"/>
    <lineage>
        <taxon>Bacteria</taxon>
        <taxon>Pseudomonadati</taxon>
        <taxon>Pseudomonadota</taxon>
        <taxon>Betaproteobacteria</taxon>
        <taxon>Burkholderiales</taxon>
        <taxon>Burkholderiaceae</taxon>
        <taxon>Burkholderia</taxon>
        <taxon>pseudomallei group</taxon>
    </lineage>
</organism>
<dbReference type="EC" id="5.3.1.6" evidence="1"/>
<dbReference type="EMBL" id="CP000124">
    <property type="protein sequence ID" value="ABA50899.1"/>
    <property type="molecule type" value="Genomic_DNA"/>
</dbReference>
<dbReference type="RefSeq" id="WP_004192848.1">
    <property type="nucleotide sequence ID" value="NC_007434.1"/>
</dbReference>
<dbReference type="SMR" id="Q3JST3"/>
<dbReference type="EnsemblBacteria" id="ABA50899">
    <property type="protein sequence ID" value="ABA50899"/>
    <property type="gene ID" value="BURPS1710b_1973"/>
</dbReference>
<dbReference type="GeneID" id="93060124"/>
<dbReference type="KEGG" id="bpm:BURPS1710b_1973"/>
<dbReference type="HOGENOM" id="CLU_056590_1_1_4"/>
<dbReference type="UniPathway" id="UPA00115">
    <property type="reaction ID" value="UER00412"/>
</dbReference>
<dbReference type="Proteomes" id="UP000002700">
    <property type="component" value="Chromosome I"/>
</dbReference>
<dbReference type="GO" id="GO:0005829">
    <property type="term" value="C:cytosol"/>
    <property type="evidence" value="ECO:0007669"/>
    <property type="project" value="TreeGrafter"/>
</dbReference>
<dbReference type="GO" id="GO:0004751">
    <property type="term" value="F:ribose-5-phosphate isomerase activity"/>
    <property type="evidence" value="ECO:0007669"/>
    <property type="project" value="UniProtKB-UniRule"/>
</dbReference>
<dbReference type="GO" id="GO:0006014">
    <property type="term" value="P:D-ribose metabolic process"/>
    <property type="evidence" value="ECO:0007669"/>
    <property type="project" value="TreeGrafter"/>
</dbReference>
<dbReference type="GO" id="GO:0009052">
    <property type="term" value="P:pentose-phosphate shunt, non-oxidative branch"/>
    <property type="evidence" value="ECO:0007669"/>
    <property type="project" value="UniProtKB-UniRule"/>
</dbReference>
<dbReference type="CDD" id="cd01398">
    <property type="entry name" value="RPI_A"/>
    <property type="match status" value="1"/>
</dbReference>
<dbReference type="FunFam" id="3.40.50.1360:FF:000001">
    <property type="entry name" value="Ribose-5-phosphate isomerase A"/>
    <property type="match status" value="1"/>
</dbReference>
<dbReference type="Gene3D" id="3.30.70.260">
    <property type="match status" value="1"/>
</dbReference>
<dbReference type="Gene3D" id="3.40.50.1360">
    <property type="match status" value="1"/>
</dbReference>
<dbReference type="HAMAP" id="MF_00170">
    <property type="entry name" value="Rib_5P_isom_A"/>
    <property type="match status" value="1"/>
</dbReference>
<dbReference type="InterPro" id="IPR037171">
    <property type="entry name" value="NagB/RpiA_transferase-like"/>
</dbReference>
<dbReference type="InterPro" id="IPR020672">
    <property type="entry name" value="Ribose5P_isomerase_typA_subgr"/>
</dbReference>
<dbReference type="InterPro" id="IPR004788">
    <property type="entry name" value="Ribose5P_isomerase_type_A"/>
</dbReference>
<dbReference type="NCBIfam" id="NF001924">
    <property type="entry name" value="PRK00702.1"/>
    <property type="match status" value="1"/>
</dbReference>
<dbReference type="NCBIfam" id="TIGR00021">
    <property type="entry name" value="rpiA"/>
    <property type="match status" value="1"/>
</dbReference>
<dbReference type="PANTHER" id="PTHR11934">
    <property type="entry name" value="RIBOSE-5-PHOSPHATE ISOMERASE"/>
    <property type="match status" value="1"/>
</dbReference>
<dbReference type="PANTHER" id="PTHR11934:SF0">
    <property type="entry name" value="RIBOSE-5-PHOSPHATE ISOMERASE"/>
    <property type="match status" value="1"/>
</dbReference>
<dbReference type="Pfam" id="PF06026">
    <property type="entry name" value="Rib_5-P_isom_A"/>
    <property type="match status" value="1"/>
</dbReference>
<dbReference type="SUPFAM" id="SSF75445">
    <property type="entry name" value="D-ribose-5-phosphate isomerase (RpiA), lid domain"/>
    <property type="match status" value="1"/>
</dbReference>
<dbReference type="SUPFAM" id="SSF100950">
    <property type="entry name" value="NagB/RpiA/CoA transferase-like"/>
    <property type="match status" value="1"/>
</dbReference>